<feature type="chain" id="PRO_0000074474" description="Defensin">
    <location>
        <begin position="1"/>
        <end position="43"/>
    </location>
</feature>
<feature type="disulfide bond" evidence="1">
    <location>
        <begin position="3"/>
        <end position="34"/>
    </location>
</feature>
<feature type="disulfide bond" evidence="1">
    <location>
        <begin position="20"/>
        <end position="39"/>
    </location>
</feature>
<feature type="disulfide bond" evidence="1">
    <location>
        <begin position="24"/>
        <end position="41"/>
    </location>
</feature>
<reference key="1">
    <citation type="journal article" date="1994" name="Biochem. J.">
        <title>Novel inducible antibacterial peptides from a hemipteran insect, the sap-sucking bug Pyrrhocoris apterus.</title>
        <authorList>
            <person name="Cociancich S."/>
            <person name="Dupont A."/>
            <person name="Hegy G."/>
            <person name="Lanot R."/>
            <person name="Holder F."/>
            <person name="Hetru C."/>
            <person name="Hoffmann J.A."/>
            <person name="Bulet P."/>
        </authorList>
    </citation>
    <scope>PROTEIN SEQUENCE</scope>
    <source>
        <tissue>Hemolymph</tissue>
    </source>
</reference>
<proteinExistence type="evidence at protein level"/>
<evidence type="ECO:0000255" key="1">
    <source>
        <dbReference type="PROSITE-ProRule" id="PRU00710"/>
    </source>
</evidence>
<dbReference type="PIR" id="S44463">
    <property type="entry name" value="S44463"/>
</dbReference>
<dbReference type="SMR" id="P37364"/>
<dbReference type="GO" id="GO:0005576">
    <property type="term" value="C:extracellular region"/>
    <property type="evidence" value="ECO:0007669"/>
    <property type="project" value="UniProtKB-SubCell"/>
</dbReference>
<dbReference type="GO" id="GO:0042742">
    <property type="term" value="P:defense response to bacterium"/>
    <property type="evidence" value="ECO:0007669"/>
    <property type="project" value="UniProtKB-KW"/>
</dbReference>
<dbReference type="GO" id="GO:0045087">
    <property type="term" value="P:innate immune response"/>
    <property type="evidence" value="ECO:0007669"/>
    <property type="project" value="UniProtKB-KW"/>
</dbReference>
<dbReference type="Gene3D" id="3.30.30.10">
    <property type="entry name" value="Knottin, scorpion toxin-like"/>
    <property type="match status" value="1"/>
</dbReference>
<dbReference type="InterPro" id="IPR001542">
    <property type="entry name" value="Defensin_invertebrate/fungal"/>
</dbReference>
<dbReference type="InterPro" id="IPR003614">
    <property type="entry name" value="Scorpion_toxin-like"/>
</dbReference>
<dbReference type="InterPro" id="IPR036574">
    <property type="entry name" value="Scorpion_toxin-like_sf"/>
</dbReference>
<dbReference type="Pfam" id="PF01097">
    <property type="entry name" value="Defensin_2"/>
    <property type="match status" value="1"/>
</dbReference>
<dbReference type="SMART" id="SM00505">
    <property type="entry name" value="Knot1"/>
    <property type="match status" value="1"/>
</dbReference>
<dbReference type="SUPFAM" id="SSF57095">
    <property type="entry name" value="Scorpion toxin-like"/>
    <property type="match status" value="1"/>
</dbReference>
<dbReference type="PROSITE" id="PS51378">
    <property type="entry name" value="INVERT_DEFENSINS"/>
    <property type="match status" value="1"/>
</dbReference>
<protein>
    <recommendedName>
        <fullName>Defensin</fullName>
    </recommendedName>
</protein>
<sequence>ATCDILSFQSQWVTPNHAGCALHCVIKGYKGGQCKITVCHCRR</sequence>
<accession>P37364</accession>
<accession>P80308</accession>
<comment type="function">
    <text>Antibacterial peptide. Affects Gram-positive bacteria M.luteus, B.megaterium, A.viridans, S.aureus and S.saprophyticus. Moderate activity against P.acidilactici and B.subtilis QB935. Also affects Gram-negative bacterium, D22 form of E.coli.</text>
</comment>
<comment type="subcellular location">
    <subcellularLocation>
        <location>Secreted</location>
    </subcellularLocation>
</comment>
<comment type="similarity">
    <text evidence="1">Belongs to the invertebrate defensin family. Type 1 subfamily.</text>
</comment>
<keyword id="KW-0044">Antibiotic</keyword>
<keyword id="KW-0929">Antimicrobial</keyword>
<keyword id="KW-0211">Defensin</keyword>
<keyword id="KW-0903">Direct protein sequencing</keyword>
<keyword id="KW-1015">Disulfide bond</keyword>
<keyword id="KW-0391">Immunity</keyword>
<keyword id="KW-0399">Innate immunity</keyword>
<keyword id="KW-0964">Secreted</keyword>
<organism>
    <name type="scientific">Pyrrhocoris apterus</name>
    <name type="common">Sap sucking bug</name>
    <name type="synonym">Cimex apterus</name>
    <dbReference type="NCBI Taxonomy" id="37000"/>
    <lineage>
        <taxon>Eukaryota</taxon>
        <taxon>Metazoa</taxon>
        <taxon>Ecdysozoa</taxon>
        <taxon>Arthropoda</taxon>
        <taxon>Hexapoda</taxon>
        <taxon>Insecta</taxon>
        <taxon>Pterygota</taxon>
        <taxon>Neoptera</taxon>
        <taxon>Paraneoptera</taxon>
        <taxon>Hemiptera</taxon>
        <taxon>Heteroptera</taxon>
        <taxon>Panheteroptera</taxon>
        <taxon>Pentatomomorpha</taxon>
        <taxon>Pyrrhocoroidea</taxon>
        <taxon>Pyrrhocoridae</taxon>
        <taxon>Pyrrhocoris</taxon>
    </lineage>
</organism>
<name>DEFI_PYRAP</name>